<protein>
    <recommendedName>
        <fullName evidence="6">Developmental and secondary metabolism regulator veA</fullName>
    </recommendedName>
    <alternativeName>
        <fullName evidence="6">Velvet complex subunit A</fullName>
    </alternativeName>
</protein>
<reference key="1">
    <citation type="journal article" date="2005" name="Nature">
        <title>Genome sequencing and analysis of Aspergillus oryzae.</title>
        <authorList>
            <person name="Machida M."/>
            <person name="Asai K."/>
            <person name="Sano M."/>
            <person name="Tanaka T."/>
            <person name="Kumagai T."/>
            <person name="Terai G."/>
            <person name="Kusumoto K."/>
            <person name="Arima T."/>
            <person name="Akita O."/>
            <person name="Kashiwagi Y."/>
            <person name="Abe K."/>
            <person name="Gomi K."/>
            <person name="Horiuchi H."/>
            <person name="Kitamoto K."/>
            <person name="Kobayashi T."/>
            <person name="Takeuchi M."/>
            <person name="Denning D.W."/>
            <person name="Galagan J.E."/>
            <person name="Nierman W.C."/>
            <person name="Yu J."/>
            <person name="Archer D.B."/>
            <person name="Bennett J.W."/>
            <person name="Bhatnagar D."/>
            <person name="Cleveland T.E."/>
            <person name="Fedorova N.D."/>
            <person name="Gotoh O."/>
            <person name="Horikawa H."/>
            <person name="Hosoyama A."/>
            <person name="Ichinomiya M."/>
            <person name="Igarashi R."/>
            <person name="Iwashita K."/>
            <person name="Juvvadi P.R."/>
            <person name="Kato M."/>
            <person name="Kato Y."/>
            <person name="Kin T."/>
            <person name="Kokubun A."/>
            <person name="Maeda H."/>
            <person name="Maeyama N."/>
            <person name="Maruyama J."/>
            <person name="Nagasaki H."/>
            <person name="Nakajima T."/>
            <person name="Oda K."/>
            <person name="Okada K."/>
            <person name="Paulsen I."/>
            <person name="Sakamoto K."/>
            <person name="Sawano T."/>
            <person name="Takahashi M."/>
            <person name="Takase K."/>
            <person name="Terabayashi Y."/>
            <person name="Wortman J.R."/>
            <person name="Yamada O."/>
            <person name="Yamagata Y."/>
            <person name="Anazawa H."/>
            <person name="Hata Y."/>
            <person name="Koide Y."/>
            <person name="Komori T."/>
            <person name="Koyama Y."/>
            <person name="Minetoki T."/>
            <person name="Suharnan S."/>
            <person name="Tanaka A."/>
            <person name="Isono K."/>
            <person name="Kuhara S."/>
            <person name="Ogasawara N."/>
            <person name="Kikuchi H."/>
        </authorList>
    </citation>
    <scope>NUCLEOTIDE SEQUENCE [LARGE SCALE GENOMIC DNA]</scope>
    <source>
        <strain>ATCC 42149 / RIB 40</strain>
    </source>
</reference>
<reference key="2">
    <citation type="journal article" date="2010" name="J. Biosci. Bioeng.">
        <title>Penicillin biosynthesis in Aspergillus oryzae and its overproduction by genetic engineering.</title>
        <authorList>
            <person name="Marui J."/>
            <person name="Ohashi-Kunihiro S."/>
            <person name="Ando T."/>
            <person name="Nishimura M."/>
            <person name="Koike H."/>
            <person name="Machida M."/>
        </authorList>
    </citation>
    <scope>FUNCTION</scope>
    <scope>DISRUPTION PHENOTYPE</scope>
</reference>
<gene>
    <name evidence="5" type="primary">veA</name>
    <name type="ORF">AO090001000237</name>
</gene>
<comment type="function">
    <text evidence="1 4">Component of the velvet transcription factor complex that controls sexual/asexual developmental ratio in response to light, promoting sexual development in the darkness while stimulating asexual sporulation under illumination (By similarity). The velvet complex hat acts as a global regulator for secondary metabolite gene expression (PubMed:20541108). Controls the expression of the penicillin gene cluster (PubMed:20541108).</text>
</comment>
<comment type="subunit">
    <text evidence="1">Component of the heterotrimeric velvet complex composed of laeA, veA and velB; VeA acting as a bridging protein between laeA and velB (By similarity).</text>
</comment>
<comment type="subcellular location">
    <subcellularLocation>
        <location evidence="1">Nucleus</location>
    </subcellularLocation>
    <subcellularLocation>
        <location evidence="1">Cytoplasm</location>
    </subcellularLocation>
    <text evidence="1">Enriched in the nucleus in the dark (By similarity).</text>
</comment>
<comment type="domain">
    <text evidence="1">The C-terminal PEST domain is a region rich in proline, glutamic acid, serine and threonine residues that is required for the light-dependent regulation of development and secondary metabolism (By similarity).</text>
</comment>
<comment type="disruption phenotype">
    <text evidence="4">Reduces the production of penicillin (PubMed:20541108).</text>
</comment>
<comment type="similarity">
    <text evidence="6">Belongs to the velvet family. VeA subfamily.</text>
</comment>
<evidence type="ECO:0000250" key="1">
    <source>
        <dbReference type="UniProtKB" id="C8VTV4"/>
    </source>
</evidence>
<evidence type="ECO:0000255" key="2">
    <source>
        <dbReference type="PROSITE-ProRule" id="PRU01165"/>
    </source>
</evidence>
<evidence type="ECO:0000256" key="3">
    <source>
        <dbReference type="SAM" id="MobiDB-lite"/>
    </source>
</evidence>
<evidence type="ECO:0000269" key="4">
    <source>
    </source>
</evidence>
<evidence type="ECO:0000303" key="5">
    <source>
    </source>
</evidence>
<evidence type="ECO:0000305" key="6"/>
<organism>
    <name type="scientific">Aspergillus oryzae (strain ATCC 42149 / RIB 40)</name>
    <name type="common">Yellow koji mold</name>
    <dbReference type="NCBI Taxonomy" id="510516"/>
    <lineage>
        <taxon>Eukaryota</taxon>
        <taxon>Fungi</taxon>
        <taxon>Dikarya</taxon>
        <taxon>Ascomycota</taxon>
        <taxon>Pezizomycotina</taxon>
        <taxon>Eurotiomycetes</taxon>
        <taxon>Eurotiomycetidae</taxon>
        <taxon>Eurotiales</taxon>
        <taxon>Aspergillaceae</taxon>
        <taxon>Aspergillus</taxon>
        <taxon>Aspergillus subgen. Circumdati</taxon>
    </lineage>
</organism>
<keyword id="KW-0963">Cytoplasm</keyword>
<keyword id="KW-0539">Nucleus</keyword>
<keyword id="KW-1185">Reference proteome</keyword>
<keyword id="KW-0749">Sporulation</keyword>
<keyword id="KW-0804">Transcription</keyword>
<keyword id="KW-0805">Transcription regulation</keyword>
<accession>Q2UNT7</accession>
<proteinExistence type="inferred from homology"/>
<dbReference type="EMBL" id="BA000050">
    <property type="protein sequence ID" value="BAE56778.1"/>
    <property type="molecule type" value="Genomic_DNA"/>
</dbReference>
<dbReference type="RefSeq" id="XP_001818780.1">
    <property type="nucleotide sequence ID" value="XM_001818728.2"/>
</dbReference>
<dbReference type="SMR" id="Q2UNT7"/>
<dbReference type="STRING" id="510516.Q2UNT7"/>
<dbReference type="EnsemblFungi" id="BAE56778">
    <property type="protein sequence ID" value="BAE56778"/>
    <property type="gene ID" value="AO090001000237"/>
</dbReference>
<dbReference type="GeneID" id="5990751"/>
<dbReference type="KEGG" id="aor:AO090001000237"/>
<dbReference type="VEuPathDB" id="FungiDB:AO090001000237"/>
<dbReference type="HOGENOM" id="CLU_022491_2_0_1"/>
<dbReference type="OMA" id="TDITFSY"/>
<dbReference type="OrthoDB" id="98343at5052"/>
<dbReference type="Proteomes" id="UP000006564">
    <property type="component" value="Chromosome 2"/>
</dbReference>
<dbReference type="GO" id="GO:0005737">
    <property type="term" value="C:cytoplasm"/>
    <property type="evidence" value="ECO:0007669"/>
    <property type="project" value="UniProtKB-SubCell"/>
</dbReference>
<dbReference type="GO" id="GO:0005634">
    <property type="term" value="C:nucleus"/>
    <property type="evidence" value="ECO:0007669"/>
    <property type="project" value="UniProtKB-SubCell"/>
</dbReference>
<dbReference type="GO" id="GO:0033246">
    <property type="term" value="P:positive regulation of penicillin metabolic process"/>
    <property type="evidence" value="ECO:0000315"/>
    <property type="project" value="AspGD"/>
</dbReference>
<dbReference type="GO" id="GO:0030435">
    <property type="term" value="P:sporulation resulting in formation of a cellular spore"/>
    <property type="evidence" value="ECO:0007669"/>
    <property type="project" value="UniProtKB-KW"/>
</dbReference>
<dbReference type="FunFam" id="2.60.40.3960:FF:000001">
    <property type="entry name" value="Sexual development activator VeA"/>
    <property type="match status" value="1"/>
</dbReference>
<dbReference type="Gene3D" id="2.60.40.3960">
    <property type="entry name" value="Velvet domain"/>
    <property type="match status" value="1"/>
</dbReference>
<dbReference type="InterPro" id="IPR021740">
    <property type="entry name" value="Velvet"/>
</dbReference>
<dbReference type="InterPro" id="IPR037525">
    <property type="entry name" value="Velvet_dom"/>
</dbReference>
<dbReference type="InterPro" id="IPR038491">
    <property type="entry name" value="Velvet_dom_sf"/>
</dbReference>
<dbReference type="PANTHER" id="PTHR33572:SF14">
    <property type="entry name" value="DEVELOPMENTAL AND SECONDARY METABOLISM REGULATOR VEA"/>
    <property type="match status" value="1"/>
</dbReference>
<dbReference type="PANTHER" id="PTHR33572">
    <property type="entry name" value="SPORE DEVELOPMENT REGULATOR VOSA"/>
    <property type="match status" value="1"/>
</dbReference>
<dbReference type="Pfam" id="PF11754">
    <property type="entry name" value="Velvet"/>
    <property type="match status" value="2"/>
</dbReference>
<dbReference type="PROSITE" id="PS51821">
    <property type="entry name" value="VELVET"/>
    <property type="match status" value="1"/>
</dbReference>
<sequence>MATRAPLAPPPNETEASVSRITREGKKLTYKLNVMQQPERARACGAGAKSSADRRPVDPPPVVELRVYESDPNDDLNKTDITFAYNANFFLYATLETARPMAQGRFAPNPTCPVLTGVPVAGVAYLDRPSQAGYFIFPDLSVRHEGVYRLNFHLYEETKESKDANENAPIQSLSNPMPSKPMAPKSFLEFRLEVVSVPFTVFSAKKFPGLATSTSLSRVIAEQGCRVRIRRDVRMRRRGEKRTDDYDYDEERVYRSSDRISTPDTHGYAGTPVERPRSTSTSTVDPSFPYGVDAQRRSSGATEYGFQGAQPYQRPLPPAPGPAPAAVSTPAPPAPPAPPSHNPGYQSHLSFGSTQTQYPAPQLPPTPQTASTLAAPYSPHPSYSHARNPSTSAEYETPGYSYPPSRMSTERSSYPKNGLPPLRLEPPKPLNMPSGEPRSSDPNAYHSVAQSAAPRSQTPSSSLVPSLPPLKALSGDYPNNLSQSSSSTSQSPSHDLGAGKKFFWDTGASLSKRSYEDSFGHDDRPLYNGMRPDTESYPRRLSDASRNFYNETRDEMAYKRANGRMATKISPALQ</sequence>
<name>VEA_ASPOR</name>
<feature type="chain" id="PRO_0000435761" description="Developmental and secondary metabolism regulator veA">
    <location>
        <begin position="1"/>
        <end position="574"/>
    </location>
</feature>
<feature type="domain" description="Velvet" evidence="2">
    <location>
        <begin position="25"/>
        <end position="230"/>
    </location>
</feature>
<feature type="region of interest" description="Disordered" evidence="3">
    <location>
        <begin position="1"/>
        <end position="22"/>
    </location>
</feature>
<feature type="region of interest" description="Disordered" evidence="3">
    <location>
        <begin position="39"/>
        <end position="60"/>
    </location>
</feature>
<feature type="region of interest" description="Disordered" evidence="3">
    <location>
        <begin position="255"/>
        <end position="500"/>
    </location>
</feature>
<feature type="region of interest" description="PEST" evidence="1">
    <location>
        <begin position="457"/>
        <end position="501"/>
    </location>
</feature>
<feature type="region of interest" description="Disordered" evidence="3">
    <location>
        <begin position="513"/>
        <end position="540"/>
    </location>
</feature>
<feature type="short sequence motif" description="Nuclear localization signal" evidence="1">
    <location>
        <begin position="39"/>
        <end position="44"/>
    </location>
</feature>
<feature type="compositionally biased region" description="Pro residues" evidence="3">
    <location>
        <begin position="314"/>
        <end position="323"/>
    </location>
</feature>
<feature type="compositionally biased region" description="Pro residues" evidence="3">
    <location>
        <begin position="330"/>
        <end position="341"/>
    </location>
</feature>
<feature type="compositionally biased region" description="Polar residues" evidence="3">
    <location>
        <begin position="343"/>
        <end position="353"/>
    </location>
</feature>
<feature type="compositionally biased region" description="Polar residues" evidence="3">
    <location>
        <begin position="385"/>
        <end position="394"/>
    </location>
</feature>
<feature type="compositionally biased region" description="Polar residues" evidence="3">
    <location>
        <begin position="406"/>
        <end position="415"/>
    </location>
</feature>
<feature type="compositionally biased region" description="Polar residues" evidence="3">
    <location>
        <begin position="448"/>
        <end position="458"/>
    </location>
</feature>
<feature type="compositionally biased region" description="Low complexity" evidence="3">
    <location>
        <begin position="459"/>
        <end position="474"/>
    </location>
</feature>
<feature type="compositionally biased region" description="Low complexity" evidence="3">
    <location>
        <begin position="482"/>
        <end position="493"/>
    </location>
</feature>
<feature type="compositionally biased region" description="Basic and acidic residues" evidence="3">
    <location>
        <begin position="513"/>
        <end position="525"/>
    </location>
</feature>